<organism>
    <name type="scientific">Salmonella typhi</name>
    <dbReference type="NCBI Taxonomy" id="90370"/>
    <lineage>
        <taxon>Bacteria</taxon>
        <taxon>Pseudomonadati</taxon>
        <taxon>Pseudomonadota</taxon>
        <taxon>Gammaproteobacteria</taxon>
        <taxon>Enterobacterales</taxon>
        <taxon>Enterobacteriaceae</taxon>
        <taxon>Salmonella</taxon>
    </lineage>
</organism>
<name>MATP_SALTI</name>
<protein>
    <recommendedName>
        <fullName evidence="1">Macrodomain Ter protein</fullName>
    </recommendedName>
</protein>
<gene>
    <name evidence="1" type="primary">matP</name>
    <name type="ordered locus">STY1090</name>
    <name type="ordered locus">t1851</name>
</gene>
<accession>Q8Z7S1</accession>
<comment type="function">
    <text evidence="1">Required for spatial organization of the terminus region of the chromosome (Ter macrodomain) during the cell cycle. Prevents early segregation of duplicated Ter macrodomains during cell division. Binds specifically to matS, which is a 13 bp signature motif repeated within the Ter macrodomain.</text>
</comment>
<comment type="subunit">
    <text evidence="1">Homodimer.</text>
</comment>
<comment type="subcellular location">
    <subcellularLocation>
        <location evidence="1">Cytoplasm</location>
    </subcellularLocation>
</comment>
<comment type="similarity">
    <text evidence="1">Belongs to the MatP family.</text>
</comment>
<reference key="1">
    <citation type="journal article" date="2001" name="Nature">
        <title>Complete genome sequence of a multiple drug resistant Salmonella enterica serovar Typhi CT18.</title>
        <authorList>
            <person name="Parkhill J."/>
            <person name="Dougan G."/>
            <person name="James K.D."/>
            <person name="Thomson N.R."/>
            <person name="Pickard D."/>
            <person name="Wain J."/>
            <person name="Churcher C.M."/>
            <person name="Mungall K.L."/>
            <person name="Bentley S.D."/>
            <person name="Holden M.T.G."/>
            <person name="Sebaihia M."/>
            <person name="Baker S."/>
            <person name="Basham D."/>
            <person name="Brooks K."/>
            <person name="Chillingworth T."/>
            <person name="Connerton P."/>
            <person name="Cronin A."/>
            <person name="Davis P."/>
            <person name="Davies R.M."/>
            <person name="Dowd L."/>
            <person name="White N."/>
            <person name="Farrar J."/>
            <person name="Feltwell T."/>
            <person name="Hamlin N."/>
            <person name="Haque A."/>
            <person name="Hien T.T."/>
            <person name="Holroyd S."/>
            <person name="Jagels K."/>
            <person name="Krogh A."/>
            <person name="Larsen T.S."/>
            <person name="Leather S."/>
            <person name="Moule S."/>
            <person name="O'Gaora P."/>
            <person name="Parry C."/>
            <person name="Quail M.A."/>
            <person name="Rutherford K.M."/>
            <person name="Simmonds M."/>
            <person name="Skelton J."/>
            <person name="Stevens K."/>
            <person name="Whitehead S."/>
            <person name="Barrell B.G."/>
        </authorList>
    </citation>
    <scope>NUCLEOTIDE SEQUENCE [LARGE SCALE GENOMIC DNA]</scope>
    <source>
        <strain>CT18</strain>
    </source>
</reference>
<reference key="2">
    <citation type="journal article" date="2003" name="J. Bacteriol.">
        <title>Comparative genomics of Salmonella enterica serovar Typhi strains Ty2 and CT18.</title>
        <authorList>
            <person name="Deng W."/>
            <person name="Liou S.-R."/>
            <person name="Plunkett G. III"/>
            <person name="Mayhew G.F."/>
            <person name="Rose D.J."/>
            <person name="Burland V."/>
            <person name="Kodoyianni V."/>
            <person name="Schwartz D.C."/>
            <person name="Blattner F.R."/>
        </authorList>
    </citation>
    <scope>NUCLEOTIDE SEQUENCE [LARGE SCALE GENOMIC DNA]</scope>
    <source>
        <strain>ATCC 700931 / Ty2</strain>
    </source>
</reference>
<feature type="chain" id="PRO_0000070355" description="Macrodomain Ter protein">
    <location>
        <begin position="1"/>
        <end position="150"/>
    </location>
</feature>
<evidence type="ECO:0000255" key="1">
    <source>
        <dbReference type="HAMAP-Rule" id="MF_01073"/>
    </source>
</evidence>
<dbReference type="EMBL" id="AL513382">
    <property type="protein sequence ID" value="CAD08195.1"/>
    <property type="molecule type" value="Genomic_DNA"/>
</dbReference>
<dbReference type="EMBL" id="AE014613">
    <property type="protein sequence ID" value="AAO69469.1"/>
    <property type="molecule type" value="Genomic_DNA"/>
</dbReference>
<dbReference type="RefSeq" id="NP_455567.1">
    <property type="nucleotide sequence ID" value="NC_003198.1"/>
</dbReference>
<dbReference type="RefSeq" id="WP_000877174.1">
    <property type="nucleotide sequence ID" value="NZ_WSUR01000013.1"/>
</dbReference>
<dbReference type="SMR" id="Q8Z7S1"/>
<dbReference type="STRING" id="220341.gene:17585073"/>
<dbReference type="KEGG" id="stt:t1851"/>
<dbReference type="KEGG" id="sty:STY1090"/>
<dbReference type="PATRIC" id="fig|220341.7.peg.1098"/>
<dbReference type="eggNOG" id="COG3120">
    <property type="taxonomic scope" value="Bacteria"/>
</dbReference>
<dbReference type="HOGENOM" id="CLU_142157_0_0_6"/>
<dbReference type="OMA" id="KYANQMS"/>
<dbReference type="OrthoDB" id="5814691at2"/>
<dbReference type="Proteomes" id="UP000000541">
    <property type="component" value="Chromosome"/>
</dbReference>
<dbReference type="Proteomes" id="UP000002670">
    <property type="component" value="Chromosome"/>
</dbReference>
<dbReference type="GO" id="GO:0005737">
    <property type="term" value="C:cytoplasm"/>
    <property type="evidence" value="ECO:0007669"/>
    <property type="project" value="UniProtKB-SubCell"/>
</dbReference>
<dbReference type="GO" id="GO:0043565">
    <property type="term" value="F:sequence-specific DNA binding"/>
    <property type="evidence" value="ECO:0007669"/>
    <property type="project" value="UniProtKB-UniRule"/>
</dbReference>
<dbReference type="GO" id="GO:0051301">
    <property type="term" value="P:cell division"/>
    <property type="evidence" value="ECO:0007669"/>
    <property type="project" value="UniProtKB-UniRule"/>
</dbReference>
<dbReference type="GO" id="GO:0006355">
    <property type="term" value="P:regulation of DNA-templated transcription"/>
    <property type="evidence" value="ECO:0007669"/>
    <property type="project" value="InterPro"/>
</dbReference>
<dbReference type="Gene3D" id="1.20.1270.380">
    <property type="entry name" value="MatP, N-terminal domain"/>
    <property type="match status" value="1"/>
</dbReference>
<dbReference type="Gene3D" id="1.10.1220.10">
    <property type="entry name" value="Met repressor-like"/>
    <property type="match status" value="1"/>
</dbReference>
<dbReference type="HAMAP" id="MF_01073">
    <property type="entry name" value="MatP"/>
    <property type="match status" value="1"/>
</dbReference>
<dbReference type="InterPro" id="IPR013321">
    <property type="entry name" value="Arc_rbn_hlx_hlx"/>
</dbReference>
<dbReference type="InterPro" id="IPR009390">
    <property type="entry name" value="MatP"/>
</dbReference>
<dbReference type="InterPro" id="IPR035375">
    <property type="entry name" value="MatP_C"/>
</dbReference>
<dbReference type="InterPro" id="IPR035087">
    <property type="entry name" value="MatP_N"/>
</dbReference>
<dbReference type="InterPro" id="IPR038339">
    <property type="entry name" value="MatP_N_sf"/>
</dbReference>
<dbReference type="NCBIfam" id="NF003471">
    <property type="entry name" value="PRK05097.1"/>
    <property type="match status" value="1"/>
</dbReference>
<dbReference type="Pfam" id="PF06303">
    <property type="entry name" value="MatP"/>
    <property type="match status" value="1"/>
</dbReference>
<dbReference type="Pfam" id="PF17414">
    <property type="entry name" value="MatP_C"/>
    <property type="match status" value="1"/>
</dbReference>
<keyword id="KW-0131">Cell cycle</keyword>
<keyword id="KW-0132">Cell division</keyword>
<keyword id="KW-0963">Cytoplasm</keyword>
<keyword id="KW-0238">DNA-binding</keyword>
<sequence>MKYQQLENLESGWKWKYLVKKHREGELITRYVEASAAQEAVNLLLALENEPVRVNVWIDRHMNPALLNRMRQTIRARRKRHFNAEHQHTRKKSIDLEFMVWQRLAGLAQRRGKTLSETIVQLIEDAEHKEKYATQMTTLKQDLQALLGKK</sequence>
<proteinExistence type="inferred from homology"/>